<reference key="1">
    <citation type="journal article" date="2005" name="BMC Biol.">
        <title>The complete chloroplast DNA sequences of the charophycean green algae Staurastrum and Zygnema reveal that the chloroplast genome underwent extensive changes during the evolution of the Zygnematales.</title>
        <authorList>
            <person name="Turmel M."/>
            <person name="Otis C."/>
            <person name="Lemieux C."/>
        </authorList>
    </citation>
    <scope>NUCLEOTIDE SEQUENCE [LARGE SCALE GENOMIC DNA]</scope>
</reference>
<name>NDHH_ZYGCR</name>
<gene>
    <name evidence="1" type="primary">ndhH</name>
</gene>
<dbReference type="EC" id="7.1.1.-" evidence="1"/>
<dbReference type="EMBL" id="AY958086">
    <property type="protein sequence ID" value="AAX45819.1"/>
    <property type="molecule type" value="Genomic_DNA"/>
</dbReference>
<dbReference type="RefSeq" id="YP_636523.1">
    <property type="nucleotide sequence ID" value="NC_008117.1"/>
</dbReference>
<dbReference type="SMR" id="Q32RK3"/>
<dbReference type="GeneID" id="4108139"/>
<dbReference type="GO" id="GO:0009535">
    <property type="term" value="C:chloroplast thylakoid membrane"/>
    <property type="evidence" value="ECO:0007669"/>
    <property type="project" value="UniProtKB-SubCell"/>
</dbReference>
<dbReference type="GO" id="GO:0051287">
    <property type="term" value="F:NAD binding"/>
    <property type="evidence" value="ECO:0007669"/>
    <property type="project" value="InterPro"/>
</dbReference>
<dbReference type="GO" id="GO:0016655">
    <property type="term" value="F:oxidoreductase activity, acting on NAD(P)H, quinone or similar compound as acceptor"/>
    <property type="evidence" value="ECO:0007669"/>
    <property type="project" value="UniProtKB-UniRule"/>
</dbReference>
<dbReference type="GO" id="GO:0048038">
    <property type="term" value="F:quinone binding"/>
    <property type="evidence" value="ECO:0007669"/>
    <property type="project" value="UniProtKB-KW"/>
</dbReference>
<dbReference type="GO" id="GO:0019684">
    <property type="term" value="P:photosynthesis, light reaction"/>
    <property type="evidence" value="ECO:0007669"/>
    <property type="project" value="UniProtKB-UniRule"/>
</dbReference>
<dbReference type="Gene3D" id="1.10.645.10">
    <property type="entry name" value="Cytochrome-c3 Hydrogenase, chain B"/>
    <property type="match status" value="1"/>
</dbReference>
<dbReference type="HAMAP" id="MF_01358">
    <property type="entry name" value="NDH1_NuoD"/>
    <property type="match status" value="1"/>
</dbReference>
<dbReference type="InterPro" id="IPR001135">
    <property type="entry name" value="NADH_Q_OxRdtase_suD"/>
</dbReference>
<dbReference type="InterPro" id="IPR014029">
    <property type="entry name" value="NADH_UbQ_OxRdtase_49kDa_CS"/>
</dbReference>
<dbReference type="InterPro" id="IPR022885">
    <property type="entry name" value="NDH1_su_D/H"/>
</dbReference>
<dbReference type="InterPro" id="IPR029014">
    <property type="entry name" value="NiFe-Hase_large"/>
</dbReference>
<dbReference type="NCBIfam" id="NF004739">
    <property type="entry name" value="PRK06075.1"/>
    <property type="match status" value="1"/>
</dbReference>
<dbReference type="NCBIfam" id="NF005649">
    <property type="entry name" value="PRK07415.1"/>
    <property type="match status" value="1"/>
</dbReference>
<dbReference type="PANTHER" id="PTHR11993:SF10">
    <property type="entry name" value="NADH DEHYDROGENASE [UBIQUINONE] IRON-SULFUR PROTEIN 2, MITOCHONDRIAL"/>
    <property type="match status" value="1"/>
</dbReference>
<dbReference type="PANTHER" id="PTHR11993">
    <property type="entry name" value="NADH-UBIQUINONE OXIDOREDUCTASE 49 KDA SUBUNIT"/>
    <property type="match status" value="1"/>
</dbReference>
<dbReference type="Pfam" id="PF00346">
    <property type="entry name" value="Complex1_49kDa"/>
    <property type="match status" value="1"/>
</dbReference>
<dbReference type="SUPFAM" id="SSF56762">
    <property type="entry name" value="HydB/Nqo4-like"/>
    <property type="match status" value="1"/>
</dbReference>
<dbReference type="PROSITE" id="PS00535">
    <property type="entry name" value="COMPLEX1_49K"/>
    <property type="match status" value="1"/>
</dbReference>
<protein>
    <recommendedName>
        <fullName evidence="1">NAD(P)H-quinone oxidoreductase subunit H, chloroplastic</fullName>
        <ecNumber evidence="1">7.1.1.-</ecNumber>
    </recommendedName>
    <alternativeName>
        <fullName>NAD(P)H dehydrogenase subunit H</fullName>
    </alternativeName>
    <alternativeName>
        <fullName evidence="1">NADH-plastoquinone oxidoreductase 49 kDa subunit</fullName>
    </alternativeName>
    <alternativeName>
        <fullName evidence="1">NADH-plastoquinone oxidoreductase subunit H</fullName>
    </alternativeName>
</protein>
<sequence length="393" mass="45327">MLITKADPMVVSMGPHHPSMHGVLRLIVTLDGENVADCEPVLGYLHRGMEKIAESRTTLQYLPYVTRWDYLATMFTEAITVNAPERLANIQVPKRASYIRMIMLELSRIASHLLWLGPFMADIGAQTPFFYILREREMIYDLFEAATGMRMMHNYFRIGGVAVDLPYGWVDKCLDFCDYFLPKVNEYERLITRNPIFLKRVEGIGVIGREEAINWGLSGPMLRASGVQWDLRKVDRYECYHELDWQVEWQSGGDCFARYLVRIGEMRESVTIIQQALKAIPGGPYENLEARRMASMAQKNSQWNDFEYQFVSKKPSPTFKLPKQEHYVRVEAPKGELGVFLIGDDSMFPWRWKIRPPGFINLQILPQLLIGMKLADIMTILGSIDIIMGEVDR</sequence>
<evidence type="ECO:0000255" key="1">
    <source>
        <dbReference type="HAMAP-Rule" id="MF_01358"/>
    </source>
</evidence>
<feature type="chain" id="PRO_0000358030" description="NAD(P)H-quinone oxidoreductase subunit H, chloroplastic">
    <location>
        <begin position="1"/>
        <end position="393"/>
    </location>
</feature>
<organism>
    <name type="scientific">Zygnema circumcarinatum</name>
    <name type="common">Green alga</name>
    <dbReference type="NCBI Taxonomy" id="35869"/>
    <lineage>
        <taxon>Eukaryota</taxon>
        <taxon>Viridiplantae</taxon>
        <taxon>Streptophyta</taxon>
        <taxon>Zygnematophyceae</taxon>
        <taxon>Zygnematophycidae</taxon>
        <taxon>Zygnematales</taxon>
        <taxon>Zygnemataceae</taxon>
        <taxon>Zygnema</taxon>
    </lineage>
</organism>
<accession>Q32RK3</accession>
<comment type="function">
    <text evidence="1">NDH shuttles electrons from NAD(P)H:plastoquinone, via FMN and iron-sulfur (Fe-S) centers, to quinones in the photosynthetic chain and possibly in a chloroplast respiratory chain. The immediate electron acceptor for the enzyme in this species is believed to be plastoquinone. Couples the redox reaction to proton translocation, and thus conserves the redox energy in a proton gradient.</text>
</comment>
<comment type="catalytic activity">
    <reaction evidence="1">
        <text>a plastoquinone + NADH + (n+1) H(+)(in) = a plastoquinol + NAD(+) + n H(+)(out)</text>
        <dbReference type="Rhea" id="RHEA:42608"/>
        <dbReference type="Rhea" id="RHEA-COMP:9561"/>
        <dbReference type="Rhea" id="RHEA-COMP:9562"/>
        <dbReference type="ChEBI" id="CHEBI:15378"/>
        <dbReference type="ChEBI" id="CHEBI:17757"/>
        <dbReference type="ChEBI" id="CHEBI:57540"/>
        <dbReference type="ChEBI" id="CHEBI:57945"/>
        <dbReference type="ChEBI" id="CHEBI:62192"/>
    </reaction>
</comment>
<comment type="catalytic activity">
    <reaction evidence="1">
        <text>a plastoquinone + NADPH + (n+1) H(+)(in) = a plastoquinol + NADP(+) + n H(+)(out)</text>
        <dbReference type="Rhea" id="RHEA:42612"/>
        <dbReference type="Rhea" id="RHEA-COMP:9561"/>
        <dbReference type="Rhea" id="RHEA-COMP:9562"/>
        <dbReference type="ChEBI" id="CHEBI:15378"/>
        <dbReference type="ChEBI" id="CHEBI:17757"/>
        <dbReference type="ChEBI" id="CHEBI:57783"/>
        <dbReference type="ChEBI" id="CHEBI:58349"/>
        <dbReference type="ChEBI" id="CHEBI:62192"/>
    </reaction>
</comment>
<comment type="subunit">
    <text evidence="1">NDH is composed of at least 16 different subunits, 5 of which are encoded in the nucleus.</text>
</comment>
<comment type="subcellular location">
    <subcellularLocation>
        <location evidence="1">Plastid</location>
        <location evidence="1">Chloroplast thylakoid membrane</location>
        <topology evidence="1">Peripheral membrane protein</topology>
        <orientation evidence="1">Stromal side</orientation>
    </subcellularLocation>
</comment>
<comment type="similarity">
    <text evidence="1">Belongs to the complex I 49 kDa subunit family.</text>
</comment>
<geneLocation type="chloroplast"/>
<proteinExistence type="inferred from homology"/>
<keyword id="KW-0150">Chloroplast</keyword>
<keyword id="KW-0472">Membrane</keyword>
<keyword id="KW-0520">NAD</keyword>
<keyword id="KW-0521">NADP</keyword>
<keyword id="KW-0934">Plastid</keyword>
<keyword id="KW-0618">Plastoquinone</keyword>
<keyword id="KW-0874">Quinone</keyword>
<keyword id="KW-0793">Thylakoid</keyword>
<keyword id="KW-1278">Translocase</keyword>
<keyword id="KW-0813">Transport</keyword>